<protein>
    <recommendedName>
        <fullName evidence="1">CDP-diacylglycerol--glycerol-3-phosphate 3-phosphatidyltransferase</fullName>
        <ecNumber evidence="1">2.7.8.5</ecNumber>
    </recommendedName>
    <alternativeName>
        <fullName evidence="1">Phosphatidylglycerophosphate synthase</fullName>
        <shortName evidence="1">PGP synthase</shortName>
    </alternativeName>
</protein>
<sequence length="182" mass="20729">MQFNIPTLLTLFRVILIPFFVLVFYLPVTWSPFAAALIFCVAAVTDWFDGFLARRWNQSTRFGAFLDPVADKVLVAIAMVLVTEHYHSWWVTLPAATMIAREIIISALREWMAELGKRSSVAVSWIGKVKTTAQMVALAWLLWRPNIWVEYVGIALFFVAAVLTLWSMLQYLSAARADLLDQ</sequence>
<keyword id="KW-0997">Cell inner membrane</keyword>
<keyword id="KW-1003">Cell membrane</keyword>
<keyword id="KW-0444">Lipid biosynthesis</keyword>
<keyword id="KW-0443">Lipid metabolism</keyword>
<keyword id="KW-0472">Membrane</keyword>
<keyword id="KW-0594">Phospholipid biosynthesis</keyword>
<keyword id="KW-1208">Phospholipid metabolism</keyword>
<keyword id="KW-0808">Transferase</keyword>
<keyword id="KW-0812">Transmembrane</keyword>
<keyword id="KW-1133">Transmembrane helix</keyword>
<gene>
    <name evidence="1" type="primary">pgsA</name>
    <name type="ordered locus">SFV_1956</name>
</gene>
<name>PGSA_SHIF8</name>
<comment type="function">
    <text evidence="1">Catalyzes the conversion of cytidine diphosphate diacylglycerol (CDP-DG) and glycerol 3-phosphate into phosphatidylglycerol. Essential for the synthesis of anionic phospholipids, thereby playing a role in balancing the ratio of zwitterionic and anionic phospholipids, which is thought to be important for normal membrane function.</text>
</comment>
<comment type="catalytic activity">
    <reaction evidence="1">
        <text>a CDP-1,2-diacyl-sn-glycerol + sn-glycerol 3-phosphate = a 1,2-diacyl-sn-glycero-3-phospho-(1'-sn-glycero-3'-phosphate) + CMP + H(+)</text>
        <dbReference type="Rhea" id="RHEA:12593"/>
        <dbReference type="ChEBI" id="CHEBI:15378"/>
        <dbReference type="ChEBI" id="CHEBI:57597"/>
        <dbReference type="ChEBI" id="CHEBI:58332"/>
        <dbReference type="ChEBI" id="CHEBI:60110"/>
        <dbReference type="ChEBI" id="CHEBI:60377"/>
        <dbReference type="EC" id="2.7.8.5"/>
    </reaction>
</comment>
<comment type="pathway">
    <text evidence="1">Phospholipid metabolism; phosphatidylglycerol biosynthesis; phosphatidylglycerol from CDP-diacylglycerol: step 1/2.</text>
</comment>
<comment type="subcellular location">
    <subcellularLocation>
        <location evidence="1">Cell inner membrane</location>
        <topology evidence="1">Multi-pass membrane protein</topology>
    </subcellularLocation>
</comment>
<comment type="similarity">
    <text evidence="1">Belongs to the CDP-alcohol phosphatidyltransferase class-I family.</text>
</comment>
<evidence type="ECO:0000255" key="1">
    <source>
        <dbReference type="HAMAP-Rule" id="MF_01437"/>
    </source>
</evidence>
<dbReference type="EC" id="2.7.8.5" evidence="1"/>
<dbReference type="EMBL" id="CP000266">
    <property type="protein sequence ID" value="ABF04100.1"/>
    <property type="molecule type" value="Genomic_DNA"/>
</dbReference>
<dbReference type="RefSeq" id="WP_001160190.1">
    <property type="nucleotide sequence ID" value="NC_008258.1"/>
</dbReference>
<dbReference type="SMR" id="Q0T3L5"/>
<dbReference type="KEGG" id="sfv:SFV_1956"/>
<dbReference type="HOGENOM" id="CLU_051314_2_1_6"/>
<dbReference type="UniPathway" id="UPA00084">
    <property type="reaction ID" value="UER00503"/>
</dbReference>
<dbReference type="Proteomes" id="UP000000659">
    <property type="component" value="Chromosome"/>
</dbReference>
<dbReference type="GO" id="GO:0005886">
    <property type="term" value="C:plasma membrane"/>
    <property type="evidence" value="ECO:0007669"/>
    <property type="project" value="UniProtKB-SubCell"/>
</dbReference>
<dbReference type="GO" id="GO:0008444">
    <property type="term" value="F:CDP-diacylglycerol-glycerol-3-phosphate 3-phosphatidyltransferase activity"/>
    <property type="evidence" value="ECO:0007669"/>
    <property type="project" value="UniProtKB-UniRule"/>
</dbReference>
<dbReference type="GO" id="GO:0006655">
    <property type="term" value="P:phosphatidylglycerol biosynthetic process"/>
    <property type="evidence" value="ECO:0007669"/>
    <property type="project" value="UniProtKB-UniRule"/>
</dbReference>
<dbReference type="FunFam" id="1.20.120.1760:FF:000001">
    <property type="entry name" value="CDP-diacylglycerol--glycerol-3-phosphate 3-phosphatidyltransferase"/>
    <property type="match status" value="1"/>
</dbReference>
<dbReference type="Gene3D" id="1.20.120.1760">
    <property type="match status" value="1"/>
</dbReference>
<dbReference type="HAMAP" id="MF_01437">
    <property type="entry name" value="PgsA"/>
    <property type="match status" value="1"/>
</dbReference>
<dbReference type="InterPro" id="IPR050324">
    <property type="entry name" value="CDP-alcohol_PTase-I"/>
</dbReference>
<dbReference type="InterPro" id="IPR000462">
    <property type="entry name" value="CDP-OH_P_trans"/>
</dbReference>
<dbReference type="InterPro" id="IPR043130">
    <property type="entry name" value="CDP-OH_PTrfase_TM_dom"/>
</dbReference>
<dbReference type="InterPro" id="IPR048254">
    <property type="entry name" value="CDP_ALCOHOL_P_TRANSF_CS"/>
</dbReference>
<dbReference type="InterPro" id="IPR023762">
    <property type="entry name" value="PGP_synthase_bac"/>
</dbReference>
<dbReference type="InterPro" id="IPR004570">
    <property type="entry name" value="Phosphatidylglycerol_P_synth"/>
</dbReference>
<dbReference type="NCBIfam" id="TIGR00560">
    <property type="entry name" value="pgsA"/>
    <property type="match status" value="1"/>
</dbReference>
<dbReference type="NCBIfam" id="NF008090">
    <property type="entry name" value="PRK10832.1"/>
    <property type="match status" value="1"/>
</dbReference>
<dbReference type="PANTHER" id="PTHR14269:SF62">
    <property type="entry name" value="CDP-DIACYLGLYCEROL--GLYCEROL-3-PHOSPHATE 3-PHOSPHATIDYLTRANSFERASE 1, CHLOROPLASTIC"/>
    <property type="match status" value="1"/>
</dbReference>
<dbReference type="PANTHER" id="PTHR14269">
    <property type="entry name" value="CDP-DIACYLGLYCEROL--GLYCEROL-3-PHOSPHATE 3-PHOSPHATIDYLTRANSFERASE-RELATED"/>
    <property type="match status" value="1"/>
</dbReference>
<dbReference type="Pfam" id="PF01066">
    <property type="entry name" value="CDP-OH_P_transf"/>
    <property type="match status" value="1"/>
</dbReference>
<dbReference type="PIRSF" id="PIRSF000847">
    <property type="entry name" value="Phos_ph_gly_syn"/>
    <property type="match status" value="1"/>
</dbReference>
<dbReference type="PROSITE" id="PS00379">
    <property type="entry name" value="CDP_ALCOHOL_P_TRANSF"/>
    <property type="match status" value="1"/>
</dbReference>
<organism>
    <name type="scientific">Shigella flexneri serotype 5b (strain 8401)</name>
    <dbReference type="NCBI Taxonomy" id="373384"/>
    <lineage>
        <taxon>Bacteria</taxon>
        <taxon>Pseudomonadati</taxon>
        <taxon>Pseudomonadota</taxon>
        <taxon>Gammaproteobacteria</taxon>
        <taxon>Enterobacterales</taxon>
        <taxon>Enterobacteriaceae</taxon>
        <taxon>Shigella</taxon>
    </lineage>
</organism>
<reference key="1">
    <citation type="journal article" date="2006" name="BMC Genomics">
        <title>Complete genome sequence of Shigella flexneri 5b and comparison with Shigella flexneri 2a.</title>
        <authorList>
            <person name="Nie H."/>
            <person name="Yang F."/>
            <person name="Zhang X."/>
            <person name="Yang J."/>
            <person name="Chen L."/>
            <person name="Wang J."/>
            <person name="Xiong Z."/>
            <person name="Peng J."/>
            <person name="Sun L."/>
            <person name="Dong J."/>
            <person name="Xue Y."/>
            <person name="Xu X."/>
            <person name="Chen S."/>
            <person name="Yao Z."/>
            <person name="Shen Y."/>
            <person name="Jin Q."/>
        </authorList>
    </citation>
    <scope>NUCLEOTIDE SEQUENCE [LARGE SCALE GENOMIC DNA]</scope>
    <source>
        <strain>8401</strain>
    </source>
</reference>
<accession>Q0T3L5</accession>
<feature type="chain" id="PRO_0000301864" description="CDP-diacylglycerol--glycerol-3-phosphate 3-phosphatidyltransferase">
    <location>
        <begin position="1"/>
        <end position="182"/>
    </location>
</feature>
<feature type="topological domain" description="Cytoplasmic" evidence="1">
    <location>
        <begin position="1"/>
        <end position="12"/>
    </location>
</feature>
<feature type="transmembrane region" description="Helical" evidence="1">
    <location>
        <begin position="13"/>
        <end position="37"/>
    </location>
</feature>
<feature type="topological domain" description="Periplasmic" evidence="1">
    <location>
        <begin position="38"/>
        <end position="60"/>
    </location>
</feature>
<feature type="transmembrane region" description="Helical" evidence="1">
    <location>
        <begin position="61"/>
        <end position="81"/>
    </location>
</feature>
<feature type="topological domain" description="Cytoplasmic" evidence="1">
    <location>
        <begin position="82"/>
        <end position="86"/>
    </location>
</feature>
<feature type="transmembrane region" description="Helical" evidence="1">
    <location>
        <begin position="87"/>
        <end position="107"/>
    </location>
</feature>
<feature type="topological domain" description="Periplasmic" evidence="1">
    <location>
        <begin position="108"/>
        <end position="145"/>
    </location>
</feature>
<feature type="transmembrane region" description="Helical" evidence="1">
    <location>
        <begin position="146"/>
        <end position="168"/>
    </location>
</feature>
<feature type="topological domain" description="Cytoplasmic" evidence="1">
    <location>
        <begin position="169"/>
        <end position="181"/>
    </location>
</feature>
<proteinExistence type="inferred from homology"/>